<protein>
    <recommendedName>
        <fullName>ATP-dependent kinase YFH7</fullName>
        <ecNumber>2.7.1.-</ecNumber>
    </recommendedName>
    <alternativeName>
        <fullName>Altered inheritance of mitochondria protein 12</fullName>
    </alternativeName>
</protein>
<accession>B3LUL5</accession>
<name>YFH7_YEAS1</name>
<feature type="chain" id="PRO_0000404219" description="ATP-dependent kinase YFH7">
    <location>
        <begin position="1"/>
        <end position="353"/>
    </location>
</feature>
<feature type="binding site" evidence="1">
    <location>
        <begin position="31"/>
        <end position="39"/>
    </location>
    <ligand>
        <name>ATP</name>
        <dbReference type="ChEBI" id="CHEBI:30616"/>
    </ligand>
</feature>
<sequence length="353" mass="39930">MVDTHKLADDVLQLLDNRIEDNYRVCVILVGSPGSGKSTIAEELCQIINEKYHTFLSEHPNVIEVNDRLKPMVNLVDSLKTLQPNEVAEMIENQGLFKDHVEDVNFQPIKYSALTSNNEECTAVVARGGTANAIRIATVDNPVNVNKLAQDSINIAQIVPMDGFHLSRRCLDLFKDPQTAHKRRGSPSTFDSNNFLQLCKILAKTSLCKVSSHHKFYSTSSVFEKLSKTFSQTIPDIFVPGFNHALKDPTPDQYCISKFTRIVILEGLYLLYDQENWKKIYKTLADTGALLVYKIDIDYEATEERVAKRHLQSGLVTTIAEGREKFRSNDLLNGRDIDNHLIKVDNIVHIRND</sequence>
<keyword id="KW-0067">ATP-binding</keyword>
<keyword id="KW-0418">Kinase</keyword>
<keyword id="KW-0547">Nucleotide-binding</keyword>
<keyword id="KW-0808">Transferase</keyword>
<dbReference type="EC" id="2.7.1.-"/>
<dbReference type="EMBL" id="CH408057">
    <property type="protein sequence ID" value="EDV09846.1"/>
    <property type="molecule type" value="Genomic_DNA"/>
</dbReference>
<dbReference type="SMR" id="B3LUL5"/>
<dbReference type="HOGENOM" id="CLU_067202_1_0_1"/>
<dbReference type="OrthoDB" id="9941at4893"/>
<dbReference type="Proteomes" id="UP000008335">
    <property type="component" value="Unassembled WGS sequence"/>
</dbReference>
<dbReference type="GO" id="GO:0005524">
    <property type="term" value="F:ATP binding"/>
    <property type="evidence" value="ECO:0007669"/>
    <property type="project" value="UniProtKB-KW"/>
</dbReference>
<dbReference type="GO" id="GO:0016301">
    <property type="term" value="F:kinase activity"/>
    <property type="evidence" value="ECO:0007669"/>
    <property type="project" value="UniProtKB-KW"/>
</dbReference>
<dbReference type="CDD" id="cd00009">
    <property type="entry name" value="AAA"/>
    <property type="match status" value="1"/>
</dbReference>
<dbReference type="FunFam" id="3.40.50.300:FF:002630">
    <property type="entry name" value="ATP-dependent kinase YFH7"/>
    <property type="match status" value="1"/>
</dbReference>
<dbReference type="Gene3D" id="3.40.50.300">
    <property type="entry name" value="P-loop containing nucleotide triphosphate hydrolases"/>
    <property type="match status" value="1"/>
</dbReference>
<dbReference type="InterPro" id="IPR027417">
    <property type="entry name" value="P-loop_NTPase"/>
</dbReference>
<dbReference type="PANTHER" id="PTHR10285">
    <property type="entry name" value="URIDINE KINASE"/>
    <property type="match status" value="1"/>
</dbReference>
<dbReference type="SUPFAM" id="SSF52540">
    <property type="entry name" value="P-loop containing nucleoside triphosphate hydrolases"/>
    <property type="match status" value="2"/>
</dbReference>
<proteinExistence type="inferred from homology"/>
<gene>
    <name type="primary">YFH7</name>
    <name type="synonym">AIM12</name>
    <name type="ORF">SCRG_05553</name>
</gene>
<comment type="function">
    <text evidence="1">ATP-dependent kinase that could be involved in endoplasmic reticulum membrane assembly.</text>
</comment>
<comment type="similarity">
    <text evidence="2">Belongs to the YFH7 family.</text>
</comment>
<organism>
    <name type="scientific">Saccharomyces cerevisiae (strain RM11-1a)</name>
    <name type="common">Baker's yeast</name>
    <dbReference type="NCBI Taxonomy" id="285006"/>
    <lineage>
        <taxon>Eukaryota</taxon>
        <taxon>Fungi</taxon>
        <taxon>Dikarya</taxon>
        <taxon>Ascomycota</taxon>
        <taxon>Saccharomycotina</taxon>
        <taxon>Saccharomycetes</taxon>
        <taxon>Saccharomycetales</taxon>
        <taxon>Saccharomycetaceae</taxon>
        <taxon>Saccharomyces</taxon>
    </lineage>
</organism>
<reference key="1">
    <citation type="submission" date="2005-03" db="EMBL/GenBank/DDBJ databases">
        <title>Annotation of the Saccharomyces cerevisiae RM11-1a genome.</title>
        <authorList>
            <consortium name="The Broad Institute Genome Sequencing Platform"/>
            <person name="Birren B.W."/>
            <person name="Lander E.S."/>
            <person name="Galagan J.E."/>
            <person name="Nusbaum C."/>
            <person name="Devon K."/>
            <person name="Cuomo C."/>
            <person name="Jaffe D.B."/>
            <person name="Butler J."/>
            <person name="Alvarez P."/>
            <person name="Gnerre S."/>
            <person name="Grabherr M."/>
            <person name="Kleber M."/>
            <person name="Mauceli E.W."/>
            <person name="Brockman W."/>
            <person name="MacCallum I.A."/>
            <person name="Rounsley S."/>
            <person name="Young S.K."/>
            <person name="LaButti K."/>
            <person name="Pushparaj V."/>
            <person name="DeCaprio D."/>
            <person name="Crawford M."/>
            <person name="Koehrsen M."/>
            <person name="Engels R."/>
            <person name="Montgomery P."/>
            <person name="Pearson M."/>
            <person name="Howarth C."/>
            <person name="Larson L."/>
            <person name="Luoma S."/>
            <person name="White J."/>
            <person name="O'Leary S."/>
            <person name="Kodira C.D."/>
            <person name="Zeng Q."/>
            <person name="Yandava C."/>
            <person name="Alvarado L."/>
            <person name="Pratt S."/>
            <person name="Kruglyak L."/>
        </authorList>
    </citation>
    <scope>NUCLEOTIDE SEQUENCE [LARGE SCALE GENOMIC DNA]</scope>
    <source>
        <strain>RM11-1a</strain>
    </source>
</reference>
<evidence type="ECO:0000250" key="1"/>
<evidence type="ECO:0000305" key="2"/>